<gene>
    <name evidence="1" type="primary">iscS</name>
    <name type="ordered locus">PP_0842</name>
    <name type="ORF">PP0842</name>
</gene>
<feature type="chain" id="PRO_1000119637" description="Cysteine desulfurase IscS">
    <location>
        <begin position="1"/>
        <end position="404"/>
    </location>
</feature>
<feature type="active site" description="Cysteine persulfide intermediate" evidence="1">
    <location>
        <position position="328"/>
    </location>
</feature>
<feature type="binding site" evidence="1">
    <location>
        <begin position="75"/>
        <end position="76"/>
    </location>
    <ligand>
        <name>pyridoxal 5'-phosphate</name>
        <dbReference type="ChEBI" id="CHEBI:597326"/>
    </ligand>
</feature>
<feature type="binding site" evidence="1">
    <location>
        <position position="155"/>
    </location>
    <ligand>
        <name>pyridoxal 5'-phosphate</name>
        <dbReference type="ChEBI" id="CHEBI:597326"/>
    </ligand>
</feature>
<feature type="binding site" evidence="1">
    <location>
        <position position="183"/>
    </location>
    <ligand>
        <name>pyridoxal 5'-phosphate</name>
        <dbReference type="ChEBI" id="CHEBI:597326"/>
    </ligand>
</feature>
<feature type="binding site" evidence="1">
    <location>
        <begin position="203"/>
        <end position="205"/>
    </location>
    <ligand>
        <name>pyridoxal 5'-phosphate</name>
        <dbReference type="ChEBI" id="CHEBI:597326"/>
    </ligand>
</feature>
<feature type="binding site" evidence="1">
    <location>
        <position position="243"/>
    </location>
    <ligand>
        <name>pyridoxal 5'-phosphate</name>
        <dbReference type="ChEBI" id="CHEBI:597326"/>
    </ligand>
</feature>
<feature type="binding site" description="via persulfide group" evidence="1">
    <location>
        <position position="328"/>
    </location>
    <ligand>
        <name>[2Fe-2S] cluster</name>
        <dbReference type="ChEBI" id="CHEBI:190135"/>
        <note>ligand shared with IscU</note>
    </ligand>
</feature>
<feature type="modified residue" description="N6-(pyridoxal phosphate)lysine" evidence="1">
    <location>
        <position position="206"/>
    </location>
</feature>
<comment type="function">
    <text evidence="1">Master enzyme that delivers sulfur to a number of partners involved in Fe-S cluster assembly, tRNA modification or cofactor biosynthesis. Catalyzes the removal of elemental sulfur atoms from cysteine to produce alanine. Functions as a sulfur delivery protein for Fe-S cluster synthesis onto IscU, an Fe-S scaffold assembly protein, as well as other S acceptor proteins.</text>
</comment>
<comment type="catalytic activity">
    <reaction evidence="1">
        <text>(sulfur carrier)-H + L-cysteine = (sulfur carrier)-SH + L-alanine</text>
        <dbReference type="Rhea" id="RHEA:43892"/>
        <dbReference type="Rhea" id="RHEA-COMP:14737"/>
        <dbReference type="Rhea" id="RHEA-COMP:14739"/>
        <dbReference type="ChEBI" id="CHEBI:29917"/>
        <dbReference type="ChEBI" id="CHEBI:35235"/>
        <dbReference type="ChEBI" id="CHEBI:57972"/>
        <dbReference type="ChEBI" id="CHEBI:64428"/>
        <dbReference type="EC" id="2.8.1.7"/>
    </reaction>
</comment>
<comment type="cofactor">
    <cofactor evidence="1">
        <name>pyridoxal 5'-phosphate</name>
        <dbReference type="ChEBI" id="CHEBI:597326"/>
    </cofactor>
</comment>
<comment type="pathway">
    <text evidence="1">Cofactor biosynthesis; iron-sulfur cluster biosynthesis.</text>
</comment>
<comment type="subunit">
    <text evidence="1">Homodimer. Forms a heterotetramer with IscU, interacts with other sulfur acceptors.</text>
</comment>
<comment type="subcellular location">
    <subcellularLocation>
        <location evidence="1">Cytoplasm</location>
    </subcellularLocation>
</comment>
<comment type="similarity">
    <text evidence="1">Belongs to the class-V pyridoxal-phosphate-dependent aminotransferase family. NifS/IscS subfamily.</text>
</comment>
<reference key="1">
    <citation type="journal article" date="2002" name="Environ. Microbiol.">
        <title>Complete genome sequence and comparative analysis of the metabolically versatile Pseudomonas putida KT2440.</title>
        <authorList>
            <person name="Nelson K.E."/>
            <person name="Weinel C."/>
            <person name="Paulsen I.T."/>
            <person name="Dodson R.J."/>
            <person name="Hilbert H."/>
            <person name="Martins dos Santos V.A.P."/>
            <person name="Fouts D.E."/>
            <person name="Gill S.R."/>
            <person name="Pop M."/>
            <person name="Holmes M."/>
            <person name="Brinkac L.M."/>
            <person name="Beanan M.J."/>
            <person name="DeBoy R.T."/>
            <person name="Daugherty S.C."/>
            <person name="Kolonay J.F."/>
            <person name="Madupu R."/>
            <person name="Nelson W.C."/>
            <person name="White O."/>
            <person name="Peterson J.D."/>
            <person name="Khouri H.M."/>
            <person name="Hance I."/>
            <person name="Chris Lee P."/>
            <person name="Holtzapple E.K."/>
            <person name="Scanlan D."/>
            <person name="Tran K."/>
            <person name="Moazzez A."/>
            <person name="Utterback T.R."/>
            <person name="Rizzo M."/>
            <person name="Lee K."/>
            <person name="Kosack D."/>
            <person name="Moestl D."/>
            <person name="Wedler H."/>
            <person name="Lauber J."/>
            <person name="Stjepandic D."/>
            <person name="Hoheisel J."/>
            <person name="Straetz M."/>
            <person name="Heim S."/>
            <person name="Kiewitz C."/>
            <person name="Eisen J.A."/>
            <person name="Timmis K.N."/>
            <person name="Duesterhoeft A."/>
            <person name="Tuemmler B."/>
            <person name="Fraser C.M."/>
        </authorList>
    </citation>
    <scope>NUCLEOTIDE SEQUENCE [LARGE SCALE GENOMIC DNA]</scope>
    <source>
        <strain>ATCC 47054 / DSM 6125 / CFBP 8728 / NCIMB 11950 / KT2440</strain>
    </source>
</reference>
<proteinExistence type="inferred from homology"/>
<dbReference type="EC" id="2.8.1.7" evidence="1"/>
<dbReference type="EMBL" id="AE015451">
    <property type="protein sequence ID" value="AAN66467.1"/>
    <property type="molecule type" value="Genomic_DNA"/>
</dbReference>
<dbReference type="RefSeq" id="NP_743003.1">
    <property type="nucleotide sequence ID" value="NC_002947.4"/>
</dbReference>
<dbReference type="RefSeq" id="WP_003248541.1">
    <property type="nucleotide sequence ID" value="NZ_CP169744.1"/>
</dbReference>
<dbReference type="SMR" id="Q88PK8"/>
<dbReference type="STRING" id="160488.PP_0842"/>
<dbReference type="PaxDb" id="160488-PP_0842"/>
<dbReference type="KEGG" id="ppu:PP_0842"/>
<dbReference type="PATRIC" id="fig|160488.4.peg.902"/>
<dbReference type="eggNOG" id="COG1104">
    <property type="taxonomic scope" value="Bacteria"/>
</dbReference>
<dbReference type="HOGENOM" id="CLU_003433_0_2_6"/>
<dbReference type="OrthoDB" id="9808002at2"/>
<dbReference type="PhylomeDB" id="Q88PK8"/>
<dbReference type="BioCyc" id="PPUT160488:G1G01-917-MONOMER"/>
<dbReference type="UniPathway" id="UPA00266"/>
<dbReference type="Proteomes" id="UP000000556">
    <property type="component" value="Chromosome"/>
</dbReference>
<dbReference type="GO" id="GO:1990221">
    <property type="term" value="C:L-cysteine desulfurase complex"/>
    <property type="evidence" value="ECO:0007669"/>
    <property type="project" value="UniProtKB-ARBA"/>
</dbReference>
<dbReference type="GO" id="GO:0051537">
    <property type="term" value="F:2 iron, 2 sulfur cluster binding"/>
    <property type="evidence" value="ECO:0007669"/>
    <property type="project" value="UniProtKB-UniRule"/>
</dbReference>
<dbReference type="GO" id="GO:0031071">
    <property type="term" value="F:cysteine desulfurase activity"/>
    <property type="evidence" value="ECO:0007669"/>
    <property type="project" value="UniProtKB-UniRule"/>
</dbReference>
<dbReference type="GO" id="GO:0046872">
    <property type="term" value="F:metal ion binding"/>
    <property type="evidence" value="ECO:0007669"/>
    <property type="project" value="UniProtKB-KW"/>
</dbReference>
<dbReference type="GO" id="GO:0030170">
    <property type="term" value="F:pyridoxal phosphate binding"/>
    <property type="evidence" value="ECO:0007669"/>
    <property type="project" value="UniProtKB-UniRule"/>
</dbReference>
<dbReference type="GO" id="GO:0044571">
    <property type="term" value="P:[2Fe-2S] cluster assembly"/>
    <property type="evidence" value="ECO:0007669"/>
    <property type="project" value="UniProtKB-UniRule"/>
</dbReference>
<dbReference type="FunFam" id="3.40.640.10:FF:000003">
    <property type="entry name" value="Cysteine desulfurase IscS"/>
    <property type="match status" value="1"/>
</dbReference>
<dbReference type="FunFam" id="3.90.1150.10:FF:000002">
    <property type="entry name" value="Cysteine desulfurase IscS"/>
    <property type="match status" value="1"/>
</dbReference>
<dbReference type="Gene3D" id="3.90.1150.10">
    <property type="entry name" value="Aspartate Aminotransferase, domain 1"/>
    <property type="match status" value="1"/>
</dbReference>
<dbReference type="Gene3D" id="3.40.640.10">
    <property type="entry name" value="Type I PLP-dependent aspartate aminotransferase-like (Major domain)"/>
    <property type="match status" value="1"/>
</dbReference>
<dbReference type="HAMAP" id="MF_00331">
    <property type="entry name" value="Cys_desulf_IscS"/>
    <property type="match status" value="1"/>
</dbReference>
<dbReference type="InterPro" id="IPR000192">
    <property type="entry name" value="Aminotrans_V_dom"/>
</dbReference>
<dbReference type="InterPro" id="IPR020578">
    <property type="entry name" value="Aminotrans_V_PyrdxlP_BS"/>
</dbReference>
<dbReference type="InterPro" id="IPR010240">
    <property type="entry name" value="Cys_deSase_IscS"/>
</dbReference>
<dbReference type="InterPro" id="IPR016454">
    <property type="entry name" value="Cysteine_dSase"/>
</dbReference>
<dbReference type="InterPro" id="IPR015424">
    <property type="entry name" value="PyrdxlP-dep_Trfase"/>
</dbReference>
<dbReference type="InterPro" id="IPR015421">
    <property type="entry name" value="PyrdxlP-dep_Trfase_major"/>
</dbReference>
<dbReference type="InterPro" id="IPR015422">
    <property type="entry name" value="PyrdxlP-dep_Trfase_small"/>
</dbReference>
<dbReference type="NCBIfam" id="TIGR02006">
    <property type="entry name" value="IscS"/>
    <property type="match status" value="1"/>
</dbReference>
<dbReference type="NCBIfam" id="NF010611">
    <property type="entry name" value="PRK14012.1"/>
    <property type="match status" value="1"/>
</dbReference>
<dbReference type="PANTHER" id="PTHR11601:SF34">
    <property type="entry name" value="CYSTEINE DESULFURASE"/>
    <property type="match status" value="1"/>
</dbReference>
<dbReference type="PANTHER" id="PTHR11601">
    <property type="entry name" value="CYSTEINE DESULFURYLASE FAMILY MEMBER"/>
    <property type="match status" value="1"/>
</dbReference>
<dbReference type="Pfam" id="PF00266">
    <property type="entry name" value="Aminotran_5"/>
    <property type="match status" value="1"/>
</dbReference>
<dbReference type="PIRSF" id="PIRSF005572">
    <property type="entry name" value="NifS"/>
    <property type="match status" value="1"/>
</dbReference>
<dbReference type="SUPFAM" id="SSF53383">
    <property type="entry name" value="PLP-dependent transferases"/>
    <property type="match status" value="1"/>
</dbReference>
<dbReference type="PROSITE" id="PS00595">
    <property type="entry name" value="AA_TRANSFER_CLASS_5"/>
    <property type="match status" value="1"/>
</dbReference>
<evidence type="ECO:0000255" key="1">
    <source>
        <dbReference type="HAMAP-Rule" id="MF_00331"/>
    </source>
</evidence>
<name>ISCS_PSEPK</name>
<protein>
    <recommendedName>
        <fullName evidence="1">Cysteine desulfurase IscS</fullName>
        <ecNumber evidence="1">2.8.1.7</ecNumber>
    </recommendedName>
</protein>
<organism>
    <name type="scientific">Pseudomonas putida (strain ATCC 47054 / DSM 6125 / CFBP 8728 / NCIMB 11950 / KT2440)</name>
    <dbReference type="NCBI Taxonomy" id="160488"/>
    <lineage>
        <taxon>Bacteria</taxon>
        <taxon>Pseudomonadati</taxon>
        <taxon>Pseudomonadota</taxon>
        <taxon>Gammaproteobacteria</taxon>
        <taxon>Pseudomonadales</taxon>
        <taxon>Pseudomonadaceae</taxon>
        <taxon>Pseudomonas</taxon>
    </lineage>
</organism>
<sequence length="404" mass="44469">MKLPIYLDYSATTPVDPRVAQKMADCLLVDGNFGNPASRSHVFGWKAEEAVENGRRQVAELINADPREIVWTSGATESDNLALKGVAHFYQTKGKHIITSKIEHKAVLDTARQLEREGFEVTYLEPGEDGIVTPAMVEAVLRDDTILVSLMHVNNEVGSINDIAAIGELTRSRGVLFHVDAAQSAGKVEIDLQKLKVDLMSFSAHKVYGPKGIGALYVSRKPRVRLEAIIHGGGHERGMRSGTLPTHQIVGMGEAFAIAKQEMVAENARIKALSDRFFKQVSNLEELYVNGSQTARVPHNLNLSFNYVEGESLLMSLKDIAVSSGSACTSASLEPSYVLRALGRNDELAHSSIRFSFGRFTTEEEVDYAAQKVCEAVNKLRELSPLWDMYKDGVDISKIEWAAH</sequence>
<keyword id="KW-0001">2Fe-2S</keyword>
<keyword id="KW-0963">Cytoplasm</keyword>
<keyword id="KW-0408">Iron</keyword>
<keyword id="KW-0411">Iron-sulfur</keyword>
<keyword id="KW-0479">Metal-binding</keyword>
<keyword id="KW-0663">Pyridoxal phosphate</keyword>
<keyword id="KW-1185">Reference proteome</keyword>
<keyword id="KW-0808">Transferase</keyword>
<accession>Q88PK8</accession>